<evidence type="ECO:0000255" key="1">
    <source>
        <dbReference type="PROSITE-ProRule" id="PRU01210"/>
    </source>
</evidence>
<evidence type="ECO:0000269" key="2">
    <source>
    </source>
</evidence>
<evidence type="ECO:0000269" key="3">
    <source>
    </source>
</evidence>
<evidence type="ECO:0000269" key="4">
    <source>
    </source>
</evidence>
<evidence type="ECO:0000269" key="5">
    <source>
    </source>
</evidence>
<evidence type="ECO:0000269" key="6">
    <source>
    </source>
</evidence>
<evidence type="ECO:0000269" key="7">
    <source>
    </source>
</evidence>
<evidence type="ECO:0000269" key="8">
    <source>
    </source>
</evidence>
<evidence type="ECO:0000303" key="9">
    <source>
    </source>
</evidence>
<evidence type="ECO:0000303" key="10">
    <source>
    </source>
</evidence>
<evidence type="ECO:0000305" key="11"/>
<evidence type="ECO:0000305" key="12">
    <source>
    </source>
</evidence>
<evidence type="ECO:0000305" key="13">
    <source>
    </source>
</evidence>
<evidence type="ECO:0000305" key="14">
    <source>
    </source>
</evidence>
<evidence type="ECO:0000312" key="15">
    <source>
        <dbReference type="PDB" id="5MOU"/>
    </source>
</evidence>
<evidence type="ECO:0007829" key="16">
    <source>
        <dbReference type="PDB" id="5MOU"/>
    </source>
</evidence>
<reference key="1">
    <citation type="journal article" date="1984" name="Bioorg. Khim.">
        <title>Amino acid sequence of 2 neurotoxins from the scorpion Buthus eupeus venom.</title>
        <authorList>
            <person name="Volkova T.M."/>
            <person name="Garsia A.F."/>
            <person name="Telezhinskaya I.N."/>
            <person name="Potapenko N.A."/>
            <person name="Grishin E.V."/>
        </authorList>
    </citation>
    <scope>PROTEIN SEQUENCE</scope>
    <scope>SUBCELLULAR LOCATION</scope>
    <source>
        <tissue>Venom</tissue>
    </source>
</reference>
<reference key="2">
    <citation type="journal article" date="1985" name="Bioorg. Khim.">
        <title>Neurotoxins from the venom of the Central Asian scorpion Buthus eupeus.</title>
        <authorList>
            <person name="Volkova T.M."/>
            <person name="Garsia A.F."/>
            <person name="Telezhinskaia I.N."/>
            <person name="Potapenko N.A."/>
            <person name="Grishin E.V."/>
        </authorList>
    </citation>
    <scope>PROTEIN SEQUENCE</scope>
    <scope>BIOASSAY</scope>
    <source>
        <tissue>Venom</tissue>
    </source>
</reference>
<reference key="3">
    <citation type="journal article" date="2013" name="J. Biol. Chem.">
        <title>Modular organization of alpha-toxins from scorpion venom mirrors domain structure of their targets, sodium channels.</title>
        <authorList>
            <person name="Chugunov A.O."/>
            <person name="Koromyslova A.D."/>
            <person name="Berkut A.A."/>
            <person name="Peigneur S."/>
            <person name="Tytgat J."/>
            <person name="Polyansky A.A."/>
            <person name="Pentkovsky V.M."/>
            <person name="Vassilevski A.A."/>
            <person name="Grishin E.V."/>
            <person name="Efremov R.G."/>
        </authorList>
    </citation>
    <scope>FUNCTION</scope>
</reference>
<reference key="4">
    <citation type="journal article" date="2017" name="FEBS Lett.">
        <title>Design of sodium channel ligands with defined selectivity - a case study in scorpion alpha-toxins.</title>
        <authorList>
            <person name="Kuldyushev N.A."/>
            <person name="Berkut A.A."/>
            <person name="Peigneur S."/>
            <person name="Tytgat J."/>
            <person name="Grishin E.V."/>
            <person name="Vassilevski A.A."/>
        </authorList>
    </citation>
    <scope>FUNCTION</scope>
    <scope>MUTAGENESIS OF ALA-4; 8-LYS--HIS-10; VAL-13; GLU-15; 17-TYR--SER-22; 40-ILE--LYS-43; ASN-56; 58-PRO--ILE-61 AND LYS-64</scope>
</reference>
<reference key="5">
    <citation type="journal article" date="1986" name="Bioorg. Khim.">
        <title>The structure of Buthus eupeus neurotoxin M9 in a solution studied by 1H-NMR spectroscopy.</title>
        <authorList>
            <person name="Pashkov V.S."/>
            <person name="Hoang A.N."/>
            <person name="Maiorov V.N."/>
            <person name="Bystrov V.F."/>
        </authorList>
    </citation>
    <scope>STRUCTURE BY NMR</scope>
    <scope>DISULFIDE BONDS</scope>
</reference>
<reference key="6">
    <citation type="journal article" date="1988" name="Biophys. Chem.">
        <title>Solution spatial structure of 'long' neurotoxin M9 from the scorpion Buthus eupeus by 1H-NMR spectroscopy.</title>
        <authorList>
            <person name="Pashkov V.S."/>
            <person name="Maiorov V.N."/>
            <person name="Bystrov V.F."/>
            <person name="Hoang A.N."/>
            <person name="Volkova T.M."/>
            <person name="Grishin E.V."/>
        </authorList>
    </citation>
    <scope>STRUCTURE BY NMR</scope>
    <scope>DISULFIDE BONDS</scope>
</reference>
<reference key="7">
    <citation type="journal article" date="2018" name="Proteins">
        <title>Refined structure of BeM9 reveals arginine hand, an overlooked structural motif in scorpion toxins affecting sodium channels.</title>
        <authorList>
            <person name="Kuldyushev N.A."/>
            <person name="Mineev K.S."/>
            <person name="Berkut A.A."/>
            <person name="Peigneur S."/>
            <person name="Arseniev A.S."/>
            <person name="Tytgat J."/>
            <person name="Grishin E.V."/>
            <person name="Vassilevski A.A."/>
        </authorList>
    </citation>
    <scope>STRUCTURE BY NMR</scope>
    <scope>DISULFIDE BONDS</scope>
    <scope>MUTAGENESIS OF ARG-60</scope>
</reference>
<comment type="function">
    <text evidence="2 7">Alpha toxins bind voltage-independently at site-3 of sodium channels (Nav) and inhibit the inactivation of the activated channels, thereby blocking neuronal transmission. This toxin is active on both mammals and insects, since it inhibits inactivation of rNav1.4/SCN4A, hNav1.5/SCN5A, mNav1.6/SCN8A and insect BgNav1 and DmNav1 channels (PubMed:23637230). In vivo, it shows paralytic activity in mice (PubMed:4091860).</text>
</comment>
<comment type="subcellular location">
    <subcellularLocation>
        <location evidence="8">Secreted</location>
    </subcellularLocation>
</comment>
<comment type="tissue specificity">
    <text evidence="14">Expressed by the venom gland.</text>
</comment>
<comment type="domain">
    <text evidence="12">Has the structural arrangement of an alpha-helix connected to antiparallel beta-sheets by disulfide bonds (CS-alpha/beta).</text>
</comment>
<comment type="miscellaneous">
    <text evidence="2">Negative results: does not show activity on rNav1.2/SCN2A (neither peak current reduction, nor inhibition of inactivation) (PubMed:23637230).</text>
</comment>
<comment type="miscellaneous">
    <text evidence="4">Adopts a cis conformation at 9-Pro-His-10.</text>
</comment>
<comment type="similarity">
    <text evidence="11">Belongs to the long (4 C-C) scorpion toxin superfamily. Sodium channel inhibitor family. Alpha subfamily.</text>
</comment>
<proteinExistence type="evidence at protein level"/>
<accession>P09981</accession>
<keyword id="KW-0002">3D-structure</keyword>
<keyword id="KW-0903">Direct protein sequencing</keyword>
<keyword id="KW-1015">Disulfide bond</keyword>
<keyword id="KW-0872">Ion channel impairing toxin</keyword>
<keyword id="KW-0528">Neurotoxin</keyword>
<keyword id="KW-0964">Secreted</keyword>
<keyword id="KW-0800">Toxin</keyword>
<keyword id="KW-0738">Voltage-gated sodium channel impairing toxin</keyword>
<name>SCX9_MESEU</name>
<organism>
    <name type="scientific">Mesobuthus eupeus</name>
    <name type="common">Lesser Asian scorpion</name>
    <name type="synonym">Buthus eupeus</name>
    <dbReference type="NCBI Taxonomy" id="34648"/>
    <lineage>
        <taxon>Eukaryota</taxon>
        <taxon>Metazoa</taxon>
        <taxon>Ecdysozoa</taxon>
        <taxon>Arthropoda</taxon>
        <taxon>Chelicerata</taxon>
        <taxon>Arachnida</taxon>
        <taxon>Scorpiones</taxon>
        <taxon>Buthida</taxon>
        <taxon>Buthoidea</taxon>
        <taxon>Buthidae</taxon>
        <taxon>Mesobuthus</taxon>
    </lineage>
</organism>
<feature type="chain" id="PRO_0000066729" description="Alpha-like toxin BeM9" evidence="7 8">
    <location>
        <begin position="1"/>
        <end position="66"/>
    </location>
</feature>
<feature type="domain" description="LCN-type CS-alpha/beta" evidence="1">
    <location>
        <begin position="2"/>
        <end position="66"/>
    </location>
</feature>
<feature type="site" description="Key residue for activity on mammalian channels, it controls twisting and flexibility of active residues at the C-terminus" evidence="13">
    <location>
        <position position="60"/>
    </location>
</feature>
<feature type="disulfide bond" evidence="4 5 6 15">
    <location>
        <begin position="12"/>
        <end position="65"/>
    </location>
</feature>
<feature type="disulfide bond" evidence="4 5 6 15">
    <location>
        <begin position="16"/>
        <end position="38"/>
    </location>
</feature>
<feature type="disulfide bond" evidence="4 5 6 15">
    <location>
        <begin position="24"/>
        <end position="48"/>
    </location>
</feature>
<feature type="disulfide bond" evidence="4 5 6 15">
    <location>
        <begin position="28"/>
        <end position="50"/>
    </location>
</feature>
<feature type="mutagenesis site" description="In msBeM9; gain of activity on rNav1.2/SCN2A (reduces peak current and inhibits inactivation), important decrease or loss in activity on rNav1.4/SCN4A, hNav1.5/SCN5A and BgNav1, and no change in activity on mNav1.6/SCN8A; when associated with 8-D--V-10; T-13; F-15; 17-G--A-22; 40-W--P-43; H-56; 58-R--G-61 and R-64." evidence="3">
    <original>A</original>
    <variation>G</variation>
    <location>
        <position position="4"/>
    </location>
</feature>
<feature type="mutagenesis site" description="In msBeM9; gain of activity on rNav1.2/SCN2A (reduces peak current and inhibits inactivation), important decrease or loss in activity on rNav1.4/SCN4A, hNav1.5/SCN5A and BgNav1, and no change in activity on mNav1.6/SCN8A; when associated with G-4; T-13; F-15; 17-G--A-22; 40-W--P-43; H-56; 58-R--G-61 and R-64." evidence="3">
    <original>KPH</original>
    <variation>DDV</variation>
    <location>
        <begin position="8"/>
        <end position="10"/>
    </location>
</feature>
<feature type="mutagenesis site" description="In msBeM9; gain of activity on rNav1.2/SCN2A (reduces peak current and inhibits inactivation), important decrease or loss in activity on rNav1.4/SCN4A, hNav1.5/SCN5A and BgNav1, and no change in activity on mNav1.6/SCN8A; when associated with G-4; 8-D--V-10; F-15; 17-G--A-22; 40-W--P-43; H-56; 58-R--G-61 and R-64." evidence="3">
    <original>V</original>
    <variation>T</variation>
    <location>
        <position position="13"/>
    </location>
</feature>
<feature type="mutagenesis site" description="In msBeM9; gain of activity on rNav1.2/SCN2A (reduces peak current and inhibits inactivation), important decrease or loss in activity on rNav1.4/SCN4A, hNav1.5/SCN5A and BgNav1, and no change in activity on mNav1.6/SCN8A; when associated with G-4; 8-D--V-10; T-13; 17-G--A-22; 40-W--P-43; H-56; 58-R--G-61 and R-64." evidence="3">
    <original>E</original>
    <variation>F</variation>
    <location>
        <position position="15"/>
    </location>
</feature>
<feature type="mutagenesis site" description="In msBeM9; gain of activity on rNav1.2/SCN2A (reduces peak current and inhibits inactivation), important decrease or loss in activity on rNav1.4/SCN4A, hNav1.5/SCN5A and BgNav1, and no change in activity on mNav1.6/SCN8A; when associated with G-4; 8-D--V-10; T-13; F-15; 40-W--P-43; H-56; 58-R--G-61 and R-64." evidence="3">
    <original>YNPKGS</original>
    <variation>GRNA</variation>
    <location>
        <begin position="17"/>
        <end position="22"/>
    </location>
</feature>
<feature type="mutagenesis site" description="In msBeM9; gain of activity on rNav1.2/SCN2A (reduces peak current and inhibits inactivation), important decrease or loss in activity on rNav1.4/SCN4A, hNav1.5/SCN5A and BgNav1, and no change in activity on mNav1.6/SCN8A; when associated with G-4; 8-D--V-10; T-13; F-15; 17-G--A-22; H-56; 58-R--G-61 and R-64." evidence="3">
    <original>ILGK</original>
    <variation>WASP</variation>
    <location>
        <begin position="40"/>
        <end position="43"/>
    </location>
</feature>
<feature type="mutagenesis site" description="In msBeM9; gain of activity on rNav1.2/SCN2A (reduces peak current and inhibits inactivation), important decrease or loss in activity on rNav1.4/SCN4A, hNav1.5/SCN5A and BgNav1, and no change in activity on mNav1.6/SCN8A; when associated with G-4; 8-D--V-10; T-13; F-15; 17-G--A-22; 40-W--P-43; 58-R--G-61 and R-64." evidence="3">
    <original>N</original>
    <variation>H</variation>
    <location>
        <position position="56"/>
    </location>
</feature>
<feature type="mutagenesis site" description="In msBeM9; gain of activity on rNav1.2/SCN2A (reduces peak current and inhibits inactivation), important decrease or loss in activity on rNav1.4/SCN4A, hNav1.5/SCN5A and BgNav1, and no change in activity on mNav1.6/SCN8A; when associated with G-4; 8-D--V-10; T-13; F-15; 17-G--A-22; 40-W--P-43; H-56 and R-64." evidence="3">
    <original>PIRI</original>
    <variation>RTKG</variation>
    <location>
        <begin position="58"/>
        <end position="61"/>
    </location>
</feature>
<feature type="mutagenesis site" description="Loss of activity on mammalian channels and increase in activity on insect channels, since there is a complete loss of activity on rNav1.4/SCN4A, hNav1.5/SCN5A, mNav1.6/SCN8A, no change on rNav1.2/SCN2A and increase in activity on B.germanica BgNav1." evidence="4">
    <original>R</original>
    <variation>K</variation>
    <location>
        <position position="60"/>
    </location>
</feature>
<feature type="mutagenesis site" description="In msBeM9; gain of activity on rNav1.2/SCN2A (reduces peak current and inhibits inactivation), important decrease or loss in activity on rNav1.4/SCN4A, hNav1.5/SCN5A and BgNav1, and no change in activity on mNav1.6/SCN8A; when associated with G-4; 8-D--V-10; T-13; F-15; 17-G--A-22; 40-W--P-43; H-56 and 58-R--G-61." evidence="3">
    <original>K</original>
    <variation>R</variation>
    <location>
        <position position="64"/>
    </location>
</feature>
<feature type="strand" evidence="16">
    <location>
        <begin position="2"/>
        <end position="8"/>
    </location>
</feature>
<feature type="turn" evidence="16">
    <location>
        <begin position="9"/>
        <end position="11"/>
    </location>
</feature>
<feature type="turn" evidence="16">
    <location>
        <begin position="19"/>
        <end position="22"/>
    </location>
</feature>
<feature type="helix" evidence="16">
    <location>
        <begin position="23"/>
        <end position="29"/>
    </location>
</feature>
<feature type="turn" evidence="16">
    <location>
        <begin position="30"/>
        <end position="32"/>
    </location>
</feature>
<feature type="strand" evidence="16">
    <location>
        <begin position="34"/>
        <end position="42"/>
    </location>
</feature>
<feature type="strand" evidence="16">
    <location>
        <begin position="45"/>
        <end position="53"/>
    </location>
</feature>
<sequence length="66" mass="7343">ARDAYIAKPHNCVYECYNPKGSYCNDLCTENGAESGYCQILGKYGNACWCIQLPDNVPIRIPGKCH</sequence>
<dbReference type="PIR" id="JT0014">
    <property type="entry name" value="NTSR9E"/>
</dbReference>
<dbReference type="PDB" id="5MOU">
    <property type="method" value="NMR"/>
    <property type="chains" value="A=1-66"/>
</dbReference>
<dbReference type="PDBsum" id="5MOU"/>
<dbReference type="BMRB" id="P09981"/>
<dbReference type="SMR" id="P09981"/>
<dbReference type="GO" id="GO:0005576">
    <property type="term" value="C:extracellular region"/>
    <property type="evidence" value="ECO:0007669"/>
    <property type="project" value="UniProtKB-SubCell"/>
</dbReference>
<dbReference type="GO" id="GO:0019871">
    <property type="term" value="F:sodium channel inhibitor activity"/>
    <property type="evidence" value="ECO:0007669"/>
    <property type="project" value="InterPro"/>
</dbReference>
<dbReference type="GO" id="GO:0090729">
    <property type="term" value="F:toxin activity"/>
    <property type="evidence" value="ECO:0007669"/>
    <property type="project" value="UniProtKB-KW"/>
</dbReference>
<dbReference type="GO" id="GO:0006952">
    <property type="term" value="P:defense response"/>
    <property type="evidence" value="ECO:0007669"/>
    <property type="project" value="InterPro"/>
</dbReference>
<dbReference type="CDD" id="cd23106">
    <property type="entry name" value="neurotoxins_LC_scorpion"/>
    <property type="match status" value="1"/>
</dbReference>
<dbReference type="FunFam" id="3.30.30.10:FF:000002">
    <property type="entry name" value="Alpha-like toxin BmK-M1"/>
    <property type="match status" value="1"/>
</dbReference>
<dbReference type="Gene3D" id="3.30.30.10">
    <property type="entry name" value="Knottin, scorpion toxin-like"/>
    <property type="match status" value="1"/>
</dbReference>
<dbReference type="InterPro" id="IPR044062">
    <property type="entry name" value="LCN-type_CS_alpha_beta_dom"/>
</dbReference>
<dbReference type="InterPro" id="IPR003614">
    <property type="entry name" value="Scorpion_toxin-like"/>
</dbReference>
<dbReference type="InterPro" id="IPR036574">
    <property type="entry name" value="Scorpion_toxin-like_sf"/>
</dbReference>
<dbReference type="InterPro" id="IPR018218">
    <property type="entry name" value="Scorpion_toxinL"/>
</dbReference>
<dbReference type="InterPro" id="IPR002061">
    <property type="entry name" value="Scorpion_toxinL/defensin"/>
</dbReference>
<dbReference type="Pfam" id="PF00537">
    <property type="entry name" value="Toxin_3"/>
    <property type="match status" value="1"/>
</dbReference>
<dbReference type="PRINTS" id="PR00285">
    <property type="entry name" value="SCORPNTOXIN"/>
</dbReference>
<dbReference type="SMART" id="SM00505">
    <property type="entry name" value="Knot1"/>
    <property type="match status" value="1"/>
</dbReference>
<dbReference type="SUPFAM" id="SSF57095">
    <property type="entry name" value="Scorpion toxin-like"/>
    <property type="match status" value="1"/>
</dbReference>
<dbReference type="PROSITE" id="PS51863">
    <property type="entry name" value="LCN_CSAB"/>
    <property type="match status" value="1"/>
</dbReference>
<protein>
    <recommendedName>
        <fullName evidence="9">Alpha-like toxin BeM9</fullName>
    </recommendedName>
    <alternativeName>
        <fullName evidence="10">Neurotoxin M9</fullName>
    </alternativeName>
</protein>